<gene>
    <name evidence="1" type="primary">rlmE</name>
    <name evidence="1" type="synonym">ftsJ</name>
    <name evidence="1" type="synonym">rrmJ</name>
    <name type="ordered locus">RBE_1120</name>
</gene>
<organism>
    <name type="scientific">Rickettsia bellii (strain RML369-C)</name>
    <dbReference type="NCBI Taxonomy" id="336407"/>
    <lineage>
        <taxon>Bacteria</taxon>
        <taxon>Pseudomonadati</taxon>
        <taxon>Pseudomonadota</taxon>
        <taxon>Alphaproteobacteria</taxon>
        <taxon>Rickettsiales</taxon>
        <taxon>Rickettsiaceae</taxon>
        <taxon>Rickettsieae</taxon>
        <taxon>Rickettsia</taxon>
        <taxon>belli group</taxon>
    </lineage>
</organism>
<evidence type="ECO:0000255" key="1">
    <source>
        <dbReference type="HAMAP-Rule" id="MF_01547"/>
    </source>
</evidence>
<keyword id="KW-0963">Cytoplasm</keyword>
<keyword id="KW-0489">Methyltransferase</keyword>
<keyword id="KW-0698">rRNA processing</keyword>
<keyword id="KW-0949">S-adenosyl-L-methionine</keyword>
<keyword id="KW-0808">Transferase</keyword>
<protein>
    <recommendedName>
        <fullName evidence="1">Ribosomal RNA large subunit methyltransferase E</fullName>
        <ecNumber evidence="1">2.1.1.166</ecNumber>
    </recommendedName>
    <alternativeName>
        <fullName evidence="1">23S rRNA Um2552 methyltransferase</fullName>
    </alternativeName>
    <alternativeName>
        <fullName evidence="1">rRNA (uridine-2'-O-)-methyltransferase</fullName>
    </alternativeName>
</protein>
<feature type="chain" id="PRO_0000272377" description="Ribosomal RNA large subunit methyltransferase E">
    <location>
        <begin position="1"/>
        <end position="227"/>
    </location>
</feature>
<feature type="active site" description="Proton acceptor" evidence="1">
    <location>
        <position position="183"/>
    </location>
</feature>
<feature type="binding site" evidence="1">
    <location>
        <position position="78"/>
    </location>
    <ligand>
        <name>S-adenosyl-L-methionine</name>
        <dbReference type="ChEBI" id="CHEBI:59789"/>
    </ligand>
</feature>
<feature type="binding site" evidence="1">
    <location>
        <position position="80"/>
    </location>
    <ligand>
        <name>S-adenosyl-L-methionine</name>
        <dbReference type="ChEBI" id="CHEBI:59789"/>
    </ligand>
</feature>
<feature type="binding site" evidence="1">
    <location>
        <position position="103"/>
    </location>
    <ligand>
        <name>S-adenosyl-L-methionine</name>
        <dbReference type="ChEBI" id="CHEBI:59789"/>
    </ligand>
</feature>
<feature type="binding site" evidence="1">
    <location>
        <position position="119"/>
    </location>
    <ligand>
        <name>S-adenosyl-L-methionine</name>
        <dbReference type="ChEBI" id="CHEBI:59789"/>
    </ligand>
</feature>
<feature type="binding site" evidence="1">
    <location>
        <position position="143"/>
    </location>
    <ligand>
        <name>S-adenosyl-L-methionine</name>
        <dbReference type="ChEBI" id="CHEBI:59789"/>
    </ligand>
</feature>
<proteinExistence type="inferred from homology"/>
<name>RLME_RICBR</name>
<dbReference type="EC" id="2.1.1.166" evidence="1"/>
<dbReference type="EMBL" id="CP000087">
    <property type="protein sequence ID" value="ABE05201.1"/>
    <property type="molecule type" value="Genomic_DNA"/>
</dbReference>
<dbReference type="RefSeq" id="WP_011477779.1">
    <property type="nucleotide sequence ID" value="NC_007940.1"/>
</dbReference>
<dbReference type="SMR" id="Q1RHG3"/>
<dbReference type="KEGG" id="rbe:RBE_1120"/>
<dbReference type="eggNOG" id="COG0293">
    <property type="taxonomic scope" value="Bacteria"/>
</dbReference>
<dbReference type="HOGENOM" id="CLU_009422_4_0_5"/>
<dbReference type="OrthoDB" id="9790080at2"/>
<dbReference type="Proteomes" id="UP000001951">
    <property type="component" value="Chromosome"/>
</dbReference>
<dbReference type="GO" id="GO:0005737">
    <property type="term" value="C:cytoplasm"/>
    <property type="evidence" value="ECO:0007669"/>
    <property type="project" value="UniProtKB-SubCell"/>
</dbReference>
<dbReference type="GO" id="GO:0008650">
    <property type="term" value="F:rRNA (uridine-2'-O-)-methyltransferase activity"/>
    <property type="evidence" value="ECO:0007669"/>
    <property type="project" value="UniProtKB-UniRule"/>
</dbReference>
<dbReference type="Gene3D" id="3.40.50.150">
    <property type="entry name" value="Vaccinia Virus protein VP39"/>
    <property type="match status" value="1"/>
</dbReference>
<dbReference type="HAMAP" id="MF_01547">
    <property type="entry name" value="RNA_methyltr_E"/>
    <property type="match status" value="1"/>
</dbReference>
<dbReference type="InterPro" id="IPR050082">
    <property type="entry name" value="RNA_methyltr_RlmE"/>
</dbReference>
<dbReference type="InterPro" id="IPR002877">
    <property type="entry name" value="RNA_MeTrfase_FtsJ_dom"/>
</dbReference>
<dbReference type="InterPro" id="IPR015507">
    <property type="entry name" value="rRNA-MeTfrase_E"/>
</dbReference>
<dbReference type="InterPro" id="IPR029063">
    <property type="entry name" value="SAM-dependent_MTases_sf"/>
</dbReference>
<dbReference type="PANTHER" id="PTHR10920">
    <property type="entry name" value="RIBOSOMAL RNA METHYLTRANSFERASE"/>
    <property type="match status" value="1"/>
</dbReference>
<dbReference type="PANTHER" id="PTHR10920:SF18">
    <property type="entry name" value="RRNA METHYLTRANSFERASE 2, MITOCHONDRIAL"/>
    <property type="match status" value="1"/>
</dbReference>
<dbReference type="Pfam" id="PF01728">
    <property type="entry name" value="FtsJ"/>
    <property type="match status" value="1"/>
</dbReference>
<dbReference type="PIRSF" id="PIRSF005461">
    <property type="entry name" value="23S_rRNA_mtase"/>
    <property type="match status" value="1"/>
</dbReference>
<dbReference type="SUPFAM" id="SSF53335">
    <property type="entry name" value="S-adenosyl-L-methionine-dependent methyltransferases"/>
    <property type="match status" value="1"/>
</dbReference>
<accession>Q1RHG3</accession>
<comment type="function">
    <text evidence="1">Specifically methylates the uridine in position 2552 of 23S rRNA at the 2'-O position of the ribose in the fully assembled 50S ribosomal subunit.</text>
</comment>
<comment type="catalytic activity">
    <reaction evidence="1">
        <text>uridine(2552) in 23S rRNA + S-adenosyl-L-methionine = 2'-O-methyluridine(2552) in 23S rRNA + S-adenosyl-L-homocysteine + H(+)</text>
        <dbReference type="Rhea" id="RHEA:42720"/>
        <dbReference type="Rhea" id="RHEA-COMP:10202"/>
        <dbReference type="Rhea" id="RHEA-COMP:10203"/>
        <dbReference type="ChEBI" id="CHEBI:15378"/>
        <dbReference type="ChEBI" id="CHEBI:57856"/>
        <dbReference type="ChEBI" id="CHEBI:59789"/>
        <dbReference type="ChEBI" id="CHEBI:65315"/>
        <dbReference type="ChEBI" id="CHEBI:74478"/>
        <dbReference type="EC" id="2.1.1.166"/>
    </reaction>
</comment>
<comment type="subcellular location">
    <subcellularLocation>
        <location evidence="1">Cytoplasm</location>
    </subcellularLocation>
</comment>
<comment type="similarity">
    <text evidence="1">Belongs to the class I-like SAM-binding methyltransferase superfamily. RNA methyltransferase RlmE family.</text>
</comment>
<sequence>MTNNLSGYRNKFVRVKTSKKRTVSSSNWLRRQLNDPYVAKARIEGFRSRAAYKLLEIHEKFKIFTPNMKVVDLGAAPGGWSQVASKLIKATDGNLKNKIISVDLLEIEPIPGVESFQKDFFEKDTEELIIQALKGKADIVLSDMASNTIGHKATDHIRTLLLCEQAFEFALKVLNPSGHFIAKIFRGGAENELLNKVKREFSTVKHFKPSSSRKESTEIYLVALNRK</sequence>
<reference key="1">
    <citation type="journal article" date="2006" name="PLoS Genet.">
        <title>Genome sequence of Rickettsia bellii illuminates the role of amoebae in gene exchanges between intracellular pathogens.</title>
        <authorList>
            <person name="Ogata H."/>
            <person name="La Scola B."/>
            <person name="Audic S."/>
            <person name="Renesto P."/>
            <person name="Blanc G."/>
            <person name="Robert C."/>
            <person name="Fournier P.-E."/>
            <person name="Claverie J.-M."/>
            <person name="Raoult D."/>
        </authorList>
    </citation>
    <scope>NUCLEOTIDE SEQUENCE [LARGE SCALE GENOMIC DNA]</scope>
    <source>
        <strain>RML369-C</strain>
    </source>
</reference>